<protein>
    <recommendedName>
        <fullName>Myoglobin</fullName>
    </recommendedName>
    <alternativeName>
        <fullName evidence="1">Nitrite reductase MB</fullName>
        <ecNumber evidence="1">1.7.-.-</ecNumber>
    </alternativeName>
    <alternativeName>
        <fullName evidence="1">Pseudoperoxidase MB</fullName>
        <ecNumber evidence="1">1.11.1.-</ecNumber>
    </alternativeName>
</protein>
<organism>
    <name type="scientific">Meles meles</name>
    <name type="common">Eurasian badger</name>
    <dbReference type="NCBI Taxonomy" id="9662"/>
    <lineage>
        <taxon>Eukaryota</taxon>
        <taxon>Metazoa</taxon>
        <taxon>Chordata</taxon>
        <taxon>Craniata</taxon>
        <taxon>Vertebrata</taxon>
        <taxon>Euteleostomi</taxon>
        <taxon>Mammalia</taxon>
        <taxon>Eutheria</taxon>
        <taxon>Laurasiatheria</taxon>
        <taxon>Carnivora</taxon>
        <taxon>Caniformia</taxon>
        <taxon>Musteloidea</taxon>
        <taxon>Mustelidae</taxon>
        <taxon>Melinae</taxon>
        <taxon>Meles</taxon>
    </lineage>
</organism>
<sequence length="154" mass="17097">MGLSDGEWQLVLNVWGKVEADLAGHGQEVLIRLFKGHPETLEKFDKFKHLKSEDEMKGSEDLKKHGNTVLTALGGILKKKGHQEAELKPLAQSHATKHKIPVKYLEFISDAIAQVLQSKHPGNFAAEAQGAMKKALELFRNDIAAKYKELGFQG</sequence>
<evidence type="ECO:0000250" key="1">
    <source>
        <dbReference type="UniProtKB" id="P02144"/>
    </source>
</evidence>
<evidence type="ECO:0000250" key="2">
    <source>
        <dbReference type="UniProtKB" id="P02185"/>
    </source>
</evidence>
<evidence type="ECO:0000250" key="3">
    <source>
        <dbReference type="UniProtKB" id="P02189"/>
    </source>
</evidence>
<evidence type="ECO:0000250" key="4">
    <source>
        <dbReference type="UniProtKB" id="P04247"/>
    </source>
</evidence>
<evidence type="ECO:0000250" key="5">
    <source>
        <dbReference type="UniProtKB" id="P68082"/>
    </source>
</evidence>
<evidence type="ECO:0000250" key="6">
    <source>
        <dbReference type="UniProtKB" id="Q9QZ76"/>
    </source>
</evidence>
<evidence type="ECO:0000255" key="7">
    <source>
        <dbReference type="PROSITE-ProRule" id="PRU00238"/>
    </source>
</evidence>
<evidence type="ECO:0000269" key="8">
    <source>
    </source>
</evidence>
<comment type="function">
    <text evidence="1">Monomeric heme protein which primary function is to store oxygen and facilitate its diffusion within muscle tissues. Reversibly binds oxygen through a pentacoordinated heme iron and enables its timely and efficient release as needed during periods of heightened demand. Depending on the oxidative conditions of tissues and cells, and in addition to its ability to bind oxygen, it also has a nitrite reductase activity whereby it regulates the production of bioactive nitric oxide. Under stress conditions, like hypoxia and anoxia, it also protects cells against reactive oxygen species thanks to its pseudoperoxidase activity.</text>
</comment>
<comment type="catalytic activity">
    <reaction evidence="1">
        <text>Fe(III)-heme b-[protein] + nitric oxide + H2O = Fe(II)-heme b-[protein] + nitrite + 2 H(+)</text>
        <dbReference type="Rhea" id="RHEA:77711"/>
        <dbReference type="Rhea" id="RHEA-COMP:18975"/>
        <dbReference type="Rhea" id="RHEA-COMP:18976"/>
        <dbReference type="ChEBI" id="CHEBI:15377"/>
        <dbReference type="ChEBI" id="CHEBI:15378"/>
        <dbReference type="ChEBI" id="CHEBI:16301"/>
        <dbReference type="ChEBI" id="CHEBI:16480"/>
        <dbReference type="ChEBI" id="CHEBI:55376"/>
        <dbReference type="ChEBI" id="CHEBI:60344"/>
    </reaction>
    <physiologicalReaction direction="right-to-left" evidence="1">
        <dbReference type="Rhea" id="RHEA:77713"/>
    </physiologicalReaction>
</comment>
<comment type="catalytic activity">
    <reaction evidence="1">
        <text>H2O2 + AH2 = A + 2 H2O</text>
        <dbReference type="Rhea" id="RHEA:30275"/>
        <dbReference type="ChEBI" id="CHEBI:13193"/>
        <dbReference type="ChEBI" id="CHEBI:15377"/>
        <dbReference type="ChEBI" id="CHEBI:16240"/>
        <dbReference type="ChEBI" id="CHEBI:17499"/>
    </reaction>
</comment>
<comment type="subunit">
    <text evidence="2">Monomeric.</text>
</comment>
<comment type="subcellular location">
    <subcellularLocation>
        <location evidence="1">Cytoplasm</location>
        <location evidence="1">Sarcoplasm</location>
    </subcellularLocation>
</comment>
<comment type="similarity">
    <text evidence="7">Belongs to the globin family.</text>
</comment>
<keyword id="KW-0963">Cytoplasm</keyword>
<keyword id="KW-0903">Direct protein sequencing</keyword>
<keyword id="KW-0349">Heme</keyword>
<keyword id="KW-0408">Iron</keyword>
<keyword id="KW-0479">Metal-binding</keyword>
<keyword id="KW-0514">Muscle protein</keyword>
<keyword id="KW-0560">Oxidoreductase</keyword>
<keyword id="KW-0561">Oxygen transport</keyword>
<keyword id="KW-0597">Phosphoprotein</keyword>
<keyword id="KW-0813">Transport</keyword>
<proteinExistence type="evidence at protein level"/>
<name>MYG_MELME</name>
<reference key="1">
    <citation type="journal article" date="1974" name="Biochim. Biophys. Acta">
        <title>The primary sequence of badger myoglobin.</title>
        <authorList>
            <person name="Tetaert D."/>
            <person name="Han K."/>
            <person name="Plancot M.-T."/>
            <person name="Dautrevaux M."/>
            <person name="Ducastaing S."/>
            <person name="Hombrados I."/>
            <person name="Neuzil E."/>
        </authorList>
    </citation>
    <scope>PROTEIN SEQUENCE OF 2-154</scope>
</reference>
<feature type="initiator methionine" description="Removed" evidence="8">
    <location>
        <position position="1"/>
    </location>
</feature>
<feature type="chain" id="PRO_0000053317" description="Myoglobin">
    <location>
        <begin position="2"/>
        <end position="154"/>
    </location>
</feature>
<feature type="domain" description="Globin" evidence="7">
    <location>
        <begin position="2"/>
        <end position="148"/>
    </location>
</feature>
<feature type="binding site" evidence="5">
    <location>
        <position position="65"/>
    </location>
    <ligand>
        <name>nitrite</name>
        <dbReference type="ChEBI" id="CHEBI:16301"/>
    </ligand>
</feature>
<feature type="binding site" evidence="3 7">
    <location>
        <position position="65"/>
    </location>
    <ligand>
        <name>O2</name>
        <dbReference type="ChEBI" id="CHEBI:15379"/>
    </ligand>
</feature>
<feature type="binding site" description="proximal binding residue" evidence="1">
    <location>
        <position position="94"/>
    </location>
    <ligand>
        <name>heme b</name>
        <dbReference type="ChEBI" id="CHEBI:60344"/>
    </ligand>
    <ligandPart>
        <name>Fe</name>
        <dbReference type="ChEBI" id="CHEBI:18248"/>
    </ligandPart>
</feature>
<feature type="modified residue" description="Phosphoserine" evidence="6">
    <location>
        <position position="4"/>
    </location>
</feature>
<feature type="modified residue" description="Phosphothreonine" evidence="4">
    <location>
        <position position="68"/>
    </location>
</feature>
<dbReference type="EC" id="1.7.-.-" evidence="1"/>
<dbReference type="EC" id="1.11.1.-" evidence="1"/>
<dbReference type="PIR" id="A02477">
    <property type="entry name" value="MYBD"/>
</dbReference>
<dbReference type="SMR" id="P02157"/>
<dbReference type="GO" id="GO:0070062">
    <property type="term" value="C:extracellular exosome"/>
    <property type="evidence" value="ECO:0007669"/>
    <property type="project" value="TreeGrafter"/>
</dbReference>
<dbReference type="GO" id="GO:0016528">
    <property type="term" value="C:sarcoplasm"/>
    <property type="evidence" value="ECO:0000250"/>
    <property type="project" value="UniProtKB"/>
</dbReference>
<dbReference type="GO" id="GO:0020037">
    <property type="term" value="F:heme binding"/>
    <property type="evidence" value="ECO:0007669"/>
    <property type="project" value="InterPro"/>
</dbReference>
<dbReference type="GO" id="GO:0046872">
    <property type="term" value="F:metal ion binding"/>
    <property type="evidence" value="ECO:0007669"/>
    <property type="project" value="UniProtKB-KW"/>
</dbReference>
<dbReference type="GO" id="GO:0098809">
    <property type="term" value="F:nitrite reductase activity"/>
    <property type="evidence" value="ECO:0000250"/>
    <property type="project" value="UniProtKB"/>
</dbReference>
<dbReference type="GO" id="GO:0019825">
    <property type="term" value="F:oxygen binding"/>
    <property type="evidence" value="ECO:0007669"/>
    <property type="project" value="InterPro"/>
</dbReference>
<dbReference type="GO" id="GO:0005344">
    <property type="term" value="F:oxygen carrier activity"/>
    <property type="evidence" value="ECO:0000250"/>
    <property type="project" value="UniProtKB"/>
</dbReference>
<dbReference type="GO" id="GO:0004601">
    <property type="term" value="F:peroxidase activity"/>
    <property type="evidence" value="ECO:0000250"/>
    <property type="project" value="UniProtKB"/>
</dbReference>
<dbReference type="GO" id="GO:0019430">
    <property type="term" value="P:removal of superoxide radicals"/>
    <property type="evidence" value="ECO:0000250"/>
    <property type="project" value="UniProtKB"/>
</dbReference>
<dbReference type="CDD" id="cd08926">
    <property type="entry name" value="Mb"/>
    <property type="match status" value="1"/>
</dbReference>
<dbReference type="Gene3D" id="6.10.140.2100">
    <property type="match status" value="1"/>
</dbReference>
<dbReference type="Gene3D" id="6.10.140.2110">
    <property type="match status" value="1"/>
</dbReference>
<dbReference type="InterPro" id="IPR000971">
    <property type="entry name" value="Globin"/>
</dbReference>
<dbReference type="InterPro" id="IPR009050">
    <property type="entry name" value="Globin-like_sf"/>
</dbReference>
<dbReference type="InterPro" id="IPR002335">
    <property type="entry name" value="Myoglobin"/>
</dbReference>
<dbReference type="PANTHER" id="PTHR47132">
    <property type="entry name" value="MYOGLOBIN"/>
    <property type="match status" value="1"/>
</dbReference>
<dbReference type="PANTHER" id="PTHR47132:SF1">
    <property type="entry name" value="MYOGLOBIN"/>
    <property type="match status" value="1"/>
</dbReference>
<dbReference type="Pfam" id="PF00042">
    <property type="entry name" value="Globin"/>
    <property type="match status" value="1"/>
</dbReference>
<dbReference type="PRINTS" id="PR00613">
    <property type="entry name" value="MYOGLOBIN"/>
</dbReference>
<dbReference type="SUPFAM" id="SSF46458">
    <property type="entry name" value="Globin-like"/>
    <property type="match status" value="1"/>
</dbReference>
<dbReference type="PROSITE" id="PS01033">
    <property type="entry name" value="GLOBIN"/>
    <property type="match status" value="1"/>
</dbReference>
<gene>
    <name type="primary">MB</name>
</gene>
<accession>P02157</accession>